<dbReference type="EC" id="3.1.21.4"/>
<dbReference type="EMBL" id="AF044847">
    <property type="protein sequence ID" value="AAC97181.1"/>
    <property type="molecule type" value="Genomic_DNA"/>
</dbReference>
<dbReference type="BRENDA" id="3.1.21.4">
    <property type="organism ID" value="44"/>
</dbReference>
<dbReference type="PRO" id="PR:O52703"/>
<dbReference type="GO" id="GO:0009036">
    <property type="term" value="F:type II site-specific deoxyribonuclease activity"/>
    <property type="evidence" value="ECO:0007669"/>
    <property type="project" value="UniProtKB-EC"/>
</dbReference>
<dbReference type="GO" id="GO:0009307">
    <property type="term" value="P:DNA restriction-modification system"/>
    <property type="evidence" value="ECO:0007669"/>
    <property type="project" value="UniProtKB-KW"/>
</dbReference>
<reference key="1">
    <citation type="journal article" date="1998" name="Mol. Gen. Genet.">
        <title>Cloning and expression of the ApaLI, NspI, NspHI, SacI, ScaI, and SapI restriction-modification systems in Escherichia coli.</title>
        <authorList>
            <person name="Xu S.-Y."/>
            <person name="Xiao J.-P."/>
            <person name="Ettwiller L."/>
            <person name="Holden M."/>
            <person name="Aliotta J."/>
            <person name="Poh C.L."/>
            <person name="Dalton M."/>
            <person name="Robinson D.P."/>
            <person name="Petronzio T.R."/>
            <person name="Moran L."/>
            <person name="Ganatra M."/>
            <person name="Ware J."/>
            <person name="Slatko B."/>
            <person name="Benner J. II"/>
        </authorList>
    </citation>
    <scope>NUCLEOTIDE SEQUENCE [GENOMIC DNA]</scope>
    <scope>FUNCTION</scope>
    <source>
        <strain>ATCC 12875</strain>
    </source>
</reference>
<reference key="2">
    <citation type="journal article" date="2003" name="Nucleic Acids Res.">
        <title>A nomenclature for restriction enzymes, DNA methyltransferases, homing endonucleases and their genes.</title>
        <authorList>
            <person name="Roberts R.J."/>
            <person name="Belfort M."/>
            <person name="Bestor T."/>
            <person name="Bhagwat A.S."/>
            <person name="Bickle T.A."/>
            <person name="Bitinaite J."/>
            <person name="Blumenthal R.M."/>
            <person name="Degtyarev S.K."/>
            <person name="Dryden D.T."/>
            <person name="Dybvig K."/>
            <person name="Firman K."/>
            <person name="Gromova E.S."/>
            <person name="Gumport R.I."/>
            <person name="Halford S.E."/>
            <person name="Hattman S."/>
            <person name="Heitman J."/>
            <person name="Hornby D.P."/>
            <person name="Janulaitis A."/>
            <person name="Jeltsch A."/>
            <person name="Josephsen J."/>
            <person name="Kiss A."/>
            <person name="Klaenhammer T.R."/>
            <person name="Kobayashi I."/>
            <person name="Kong H."/>
            <person name="Krueger D.H."/>
            <person name="Lacks S."/>
            <person name="Marinus M.G."/>
            <person name="Miyahara M."/>
            <person name="Morgan R.D."/>
            <person name="Murray N.E."/>
            <person name="Nagaraja V."/>
            <person name="Piekarowicz A."/>
            <person name="Pingoud A."/>
            <person name="Raleigh E."/>
            <person name="Rao D.N."/>
            <person name="Reich N."/>
            <person name="Repin V.E."/>
            <person name="Selker E.U."/>
            <person name="Shaw P.C."/>
            <person name="Stein D.C."/>
            <person name="Stoddard B.L."/>
            <person name="Szybalski W."/>
            <person name="Trautner T.A."/>
            <person name="Van Etten J.L."/>
            <person name="Vitor J.M."/>
            <person name="Wilson G.G."/>
            <person name="Xu S.Y."/>
        </authorList>
    </citation>
    <scope>NOMENCLATURE</scope>
    <scope>SUBTYPE</scope>
</reference>
<gene>
    <name evidence="2" type="primary">apaLIR</name>
</gene>
<organism>
    <name type="scientific">Acetobacter pasteurianus</name>
    <name type="common">Acetobacter turbidans</name>
    <dbReference type="NCBI Taxonomy" id="438"/>
    <lineage>
        <taxon>Bacteria</taxon>
        <taxon>Pseudomonadati</taxon>
        <taxon>Pseudomonadota</taxon>
        <taxon>Alphaproteobacteria</taxon>
        <taxon>Acetobacterales</taxon>
        <taxon>Acetobacteraceae</taxon>
        <taxon>Acetobacter</taxon>
    </lineage>
</organism>
<comment type="function">
    <text evidence="1 3">A subtype P restriction enzyme that recognizes the double-stranded sequence 5'-GTGCAC-3' and cleaves after G-1.</text>
</comment>
<comment type="catalytic activity">
    <reaction>
        <text>Endonucleolytic cleavage of DNA to give specific double-stranded fragments with terminal 5'-phosphates.</text>
        <dbReference type="EC" id="3.1.21.4"/>
    </reaction>
</comment>
<accession>O52703</accession>
<evidence type="ECO:0000303" key="1">
    <source>
    </source>
</evidence>
<evidence type="ECO:0000303" key="2">
    <source>
    </source>
</evidence>
<evidence type="ECO:0000305" key="3">
    <source>
    </source>
</evidence>
<proteinExistence type="predicted"/>
<sequence>MTTRQRLSAERSQQLTRLLTITKTANMRALMEASELAKVIALVAVDIGKSDEMARAFPVLWPKISPQQEYYATAVDWFTNPDETVTSFDVVDMLDAGTSLDQDFMTYLKCLTELHKRRRKYGLILQRQPLPTMVQVSPRALMEYGPDFPPEALASWLTWRKFFYDLDNRSAQETGYLFEPILAAAIGGEAKSARERVVRRTDDPTKGRQVDCWKVLPDGTPLAYELKLRVTIAASGQGRFGEELSFARDCSSSGAKPILVVLDPTENDKLTGLQAAYREVGGAAYVGDAAWAHLEDEAGATMASFIERYVRVPVASVSSFERVIEGDATKRSLILQDLQARLDGNELTISLGGHQRLVERHEDQSLAADGDDDSE</sequence>
<keyword id="KW-0255">Endonuclease</keyword>
<keyword id="KW-0378">Hydrolase</keyword>
<keyword id="KW-0540">Nuclease</keyword>
<keyword id="KW-0680">Restriction system</keyword>
<feature type="chain" id="PRO_0000077275" description="Type II restriction enzyme ApaLI">
    <location>
        <begin position="1"/>
        <end position="375"/>
    </location>
</feature>
<name>T2A1_ACEPA</name>
<protein>
    <recommendedName>
        <fullName evidence="1">Type II restriction enzyme ApaLI</fullName>
        <shortName>R.ApaLI</shortName>
        <ecNumber>3.1.21.4</ecNumber>
    </recommendedName>
    <alternativeName>
        <fullName>Endonuclease ApaLI</fullName>
    </alternativeName>
    <alternativeName>
        <fullName>Type-2 restriction enzyme ApaLI</fullName>
    </alternativeName>
</protein>